<sequence>MPIDQEKLAKLQKLSANNKVGGTRRKLNKKAGSSAGANKDDTKLQSQLAKLHAVTIDNVAEANFFKDDGKVMHFNKVGVQVAAQHNTSVFYGLPQEKNLQDLFPGIISQLGPEAIQALSQLAAQMEKHEAKAPADAEKKDEAIPELVEGQTFDADVE</sequence>
<evidence type="ECO:0000255" key="1">
    <source>
        <dbReference type="PROSITE-ProRule" id="PRU00507"/>
    </source>
</evidence>
<evidence type="ECO:0000256" key="2">
    <source>
        <dbReference type="SAM" id="MobiDB-lite"/>
    </source>
</evidence>
<evidence type="ECO:0000269" key="3">
    <source>
    </source>
</evidence>
<evidence type="ECO:0000269" key="4">
    <source>
    </source>
</evidence>
<evidence type="ECO:0000269" key="5">
    <source>
    </source>
</evidence>
<evidence type="ECO:0000269" key="6">
    <source>
    </source>
</evidence>
<evidence type="ECO:0000305" key="7"/>
<evidence type="ECO:0007744" key="8">
    <source>
    </source>
</evidence>
<evidence type="ECO:0007744" key="9">
    <source>
    </source>
</evidence>
<evidence type="ECO:0007744" key="10">
    <source>
    </source>
</evidence>
<keyword id="KW-0963">Cytoplasm</keyword>
<keyword id="KW-0903">Direct protein sequencing</keyword>
<keyword id="KW-0539">Nucleus</keyword>
<keyword id="KW-0597">Phosphoprotein</keyword>
<keyword id="KW-0653">Protein transport</keyword>
<keyword id="KW-1185">Reference proteome</keyword>
<keyword id="KW-0678">Repressor</keyword>
<keyword id="KW-0804">Transcription</keyword>
<keyword id="KW-0805">Transcription regulation</keyword>
<keyword id="KW-0813">Transport</keyword>
<keyword id="KW-0832">Ubl conjugation</keyword>
<proteinExistence type="evidence at protein level"/>
<protein>
    <recommendedName>
        <fullName>Nascent polypeptide-associated complex subunit beta-1</fullName>
        <shortName>NAC-beta-1</shortName>
    </recommendedName>
    <alternativeName>
        <fullName>BTF3 homolog EGD1</fullName>
    </alternativeName>
    <alternativeName>
        <fullName>Beta-1-NAC</fullName>
    </alternativeName>
    <alternativeName>
        <fullName>GAL4 DNA-binding enhancer protein 1</fullName>
    </alternativeName>
</protein>
<dbReference type="EMBL" id="L05185">
    <property type="protein sequence ID" value="AAB63973.1"/>
    <property type="status" value="ALT_FRAME"/>
    <property type="molecule type" value="Genomic_DNA"/>
</dbReference>
<dbReference type="EMBL" id="S49596">
    <property type="protein sequence ID" value="AAB24290.1"/>
    <property type="status" value="ALT_FRAME"/>
    <property type="molecule type" value="Genomic_DNA"/>
</dbReference>
<dbReference type="EMBL" id="X78725">
    <property type="protein sequence ID" value="CAA55371.1"/>
    <property type="molecule type" value="Genomic_DNA"/>
</dbReference>
<dbReference type="EMBL" id="U44030">
    <property type="protein sequence ID" value="AAB68183.1"/>
    <property type="molecule type" value="Genomic_DNA"/>
</dbReference>
<dbReference type="EMBL" id="AY558440">
    <property type="protein sequence ID" value="AAS56766.1"/>
    <property type="molecule type" value="Genomic_DNA"/>
</dbReference>
<dbReference type="EMBL" id="J04421">
    <property type="status" value="NOT_ANNOTATED_CDS"/>
    <property type="molecule type" value="Genomic_DNA"/>
</dbReference>
<dbReference type="EMBL" id="BK006949">
    <property type="protein sequence ID" value="DAA11393.1"/>
    <property type="molecule type" value="Genomic_DNA"/>
</dbReference>
<dbReference type="PIR" id="S47575">
    <property type="entry name" value="S47575"/>
</dbReference>
<dbReference type="RefSeq" id="NP_015288.1">
    <property type="nucleotide sequence ID" value="NM_001183851.1"/>
</dbReference>
<dbReference type="SMR" id="Q02642"/>
<dbReference type="BioGRID" id="36142">
    <property type="interactions" value="216"/>
</dbReference>
<dbReference type="ComplexPortal" id="CPX-1306">
    <property type="entry name" value="Nascent polypeptide-associated complex, EGD1-EGD2 variant"/>
</dbReference>
<dbReference type="DIP" id="DIP-6561N"/>
<dbReference type="FunCoup" id="Q02642">
    <property type="interactions" value="1465"/>
</dbReference>
<dbReference type="IntAct" id="Q02642">
    <property type="interactions" value="31"/>
</dbReference>
<dbReference type="MINT" id="Q02642"/>
<dbReference type="STRING" id="4932.YPL037C"/>
<dbReference type="iPTMnet" id="Q02642"/>
<dbReference type="PaxDb" id="4932-YPL037C"/>
<dbReference type="PeptideAtlas" id="Q02642"/>
<dbReference type="TopDownProteomics" id="Q02642"/>
<dbReference type="EnsemblFungi" id="YPL037C_mRNA">
    <property type="protein sequence ID" value="YPL037C"/>
    <property type="gene ID" value="YPL037C"/>
</dbReference>
<dbReference type="GeneID" id="856070"/>
<dbReference type="KEGG" id="sce:YPL037C"/>
<dbReference type="AGR" id="SGD:S000005958"/>
<dbReference type="SGD" id="S000005958">
    <property type="gene designation" value="EGD1"/>
</dbReference>
<dbReference type="VEuPathDB" id="FungiDB:YPL037C"/>
<dbReference type="eggNOG" id="KOG2240">
    <property type="taxonomic scope" value="Eukaryota"/>
</dbReference>
<dbReference type="GeneTree" id="ENSGT00940000176500"/>
<dbReference type="HOGENOM" id="CLU_098726_2_2_1"/>
<dbReference type="InParanoid" id="Q02642"/>
<dbReference type="OMA" id="RMQQSVR"/>
<dbReference type="OrthoDB" id="8033832at2759"/>
<dbReference type="BioCyc" id="YEAST:G3O-33951-MONOMER"/>
<dbReference type="BioGRID-ORCS" id="856070">
    <property type="hits" value="2 hits in 10 CRISPR screens"/>
</dbReference>
<dbReference type="PRO" id="PR:Q02642"/>
<dbReference type="Proteomes" id="UP000002311">
    <property type="component" value="Chromosome XVI"/>
</dbReference>
<dbReference type="RNAct" id="Q02642">
    <property type="molecule type" value="protein"/>
</dbReference>
<dbReference type="GO" id="GO:0005737">
    <property type="term" value="C:cytoplasm"/>
    <property type="evidence" value="ECO:0000314"/>
    <property type="project" value="ComplexPortal"/>
</dbReference>
<dbReference type="GO" id="GO:0005829">
    <property type="term" value="C:cytosol"/>
    <property type="evidence" value="ECO:0000318"/>
    <property type="project" value="GO_Central"/>
</dbReference>
<dbReference type="GO" id="GO:0005854">
    <property type="term" value="C:nascent polypeptide-associated complex"/>
    <property type="evidence" value="ECO:0000314"/>
    <property type="project" value="SGD"/>
</dbReference>
<dbReference type="GO" id="GO:0005634">
    <property type="term" value="C:nucleus"/>
    <property type="evidence" value="ECO:0007669"/>
    <property type="project" value="UniProtKB-SubCell"/>
</dbReference>
<dbReference type="GO" id="GO:0051082">
    <property type="term" value="F:unfolded protein binding"/>
    <property type="evidence" value="ECO:0000315"/>
    <property type="project" value="SGD"/>
</dbReference>
<dbReference type="GO" id="GO:0051083">
    <property type="term" value="P:'de novo' cotranslational protein folding"/>
    <property type="evidence" value="ECO:0000303"/>
    <property type="project" value="ComplexPortal"/>
</dbReference>
<dbReference type="GO" id="GO:0006613">
    <property type="term" value="P:cotranslational protein targeting to membrane"/>
    <property type="evidence" value="ECO:0000316"/>
    <property type="project" value="SGD"/>
</dbReference>
<dbReference type="GO" id="GO:0016236">
    <property type="term" value="P:macroautophagy"/>
    <property type="evidence" value="ECO:0000315"/>
    <property type="project" value="SGD"/>
</dbReference>
<dbReference type="GO" id="GO:0000423">
    <property type="term" value="P:mitophagy"/>
    <property type="evidence" value="ECO:0000315"/>
    <property type="project" value="SGD"/>
</dbReference>
<dbReference type="GO" id="GO:0015031">
    <property type="term" value="P:protein transport"/>
    <property type="evidence" value="ECO:0007669"/>
    <property type="project" value="UniProtKB-KW"/>
</dbReference>
<dbReference type="CDD" id="cd22055">
    <property type="entry name" value="NAC_BTF3"/>
    <property type="match status" value="1"/>
</dbReference>
<dbReference type="FunFam" id="2.20.70.30:FF:000001">
    <property type="entry name" value="Transcription factor BTF3 homolog"/>
    <property type="match status" value="1"/>
</dbReference>
<dbReference type="Gene3D" id="2.20.70.30">
    <property type="entry name" value="Nascent polypeptide-associated complex domain"/>
    <property type="match status" value="1"/>
</dbReference>
<dbReference type="InterPro" id="IPR039370">
    <property type="entry name" value="BTF3"/>
</dbReference>
<dbReference type="InterPro" id="IPR038187">
    <property type="entry name" value="NAC_A/B_dom_sf"/>
</dbReference>
<dbReference type="InterPro" id="IPR002715">
    <property type="entry name" value="Nas_poly-pep-assoc_cplx_dom"/>
</dbReference>
<dbReference type="PANTHER" id="PTHR10351">
    <property type="entry name" value="TRANSCRIPTION FACTOR BTF3 FAMILY MEMBER"/>
    <property type="match status" value="1"/>
</dbReference>
<dbReference type="Pfam" id="PF01849">
    <property type="entry name" value="NAC"/>
    <property type="match status" value="1"/>
</dbReference>
<dbReference type="SMART" id="SM01407">
    <property type="entry name" value="NAC"/>
    <property type="match status" value="1"/>
</dbReference>
<dbReference type="PROSITE" id="PS51151">
    <property type="entry name" value="NAC_AB"/>
    <property type="match status" value="1"/>
</dbReference>
<reference key="1">
    <citation type="journal article" date="1992" name="Mol. Cell. Biol.">
        <title>The EGD1 product, a yeast homolog of human BTF3, may be involved in GAL4 DNA binding.</title>
        <authorList>
            <person name="Parthun M.R."/>
            <person name="Mangus D.A."/>
            <person name="Jaehning J.A."/>
        </authorList>
    </citation>
    <scope>NUCLEOTIDE SEQUENCE [GENOMIC DNA]</scope>
    <scope>PARTIAL PROTEIN SEQUENCE</scope>
    <source>
        <strain>YJJ160</strain>
    </source>
</reference>
<reference key="2">
    <citation type="journal article" date="1994" name="Nucleic Acids Res.">
        <title>Yeast BTF3 protein is encoded by duplicated genes and inhibits the expression of some genes in vivo.</title>
        <authorList>
            <person name="Hu G.-Z."/>
            <person name="Ronne H."/>
        </authorList>
    </citation>
    <scope>NUCLEOTIDE SEQUENCE [GENOMIC DNA]</scope>
    <source>
        <strain>ATCC 208353 / W303-1A</strain>
    </source>
</reference>
<reference key="3">
    <citation type="journal article" date="1997" name="Nature">
        <title>The nucleotide sequence of Saccharomyces cerevisiae chromosome XVI.</title>
        <authorList>
            <person name="Bussey H."/>
            <person name="Storms R.K."/>
            <person name="Ahmed A."/>
            <person name="Albermann K."/>
            <person name="Allen E."/>
            <person name="Ansorge W."/>
            <person name="Araujo R."/>
            <person name="Aparicio A."/>
            <person name="Barrell B.G."/>
            <person name="Badcock K."/>
            <person name="Benes V."/>
            <person name="Botstein D."/>
            <person name="Bowman S."/>
            <person name="Brueckner M."/>
            <person name="Carpenter J."/>
            <person name="Cherry J.M."/>
            <person name="Chung E."/>
            <person name="Churcher C.M."/>
            <person name="Coster F."/>
            <person name="Davis K."/>
            <person name="Davis R.W."/>
            <person name="Dietrich F.S."/>
            <person name="Delius H."/>
            <person name="DiPaolo T."/>
            <person name="Dubois E."/>
            <person name="Duesterhoeft A."/>
            <person name="Duncan M."/>
            <person name="Floeth M."/>
            <person name="Fortin N."/>
            <person name="Friesen J.D."/>
            <person name="Fritz C."/>
            <person name="Goffeau A."/>
            <person name="Hall J."/>
            <person name="Hebling U."/>
            <person name="Heumann K."/>
            <person name="Hilbert H."/>
            <person name="Hillier L.W."/>
            <person name="Hunicke-Smith S."/>
            <person name="Hyman R.W."/>
            <person name="Johnston M."/>
            <person name="Kalman S."/>
            <person name="Kleine K."/>
            <person name="Komp C."/>
            <person name="Kurdi O."/>
            <person name="Lashkari D."/>
            <person name="Lew H."/>
            <person name="Lin A."/>
            <person name="Lin D."/>
            <person name="Louis E.J."/>
            <person name="Marathe R."/>
            <person name="Messenguy F."/>
            <person name="Mewes H.-W."/>
            <person name="Mirtipati S."/>
            <person name="Moestl D."/>
            <person name="Mueller-Auer S."/>
            <person name="Namath A."/>
            <person name="Nentwich U."/>
            <person name="Oefner P."/>
            <person name="Pearson D."/>
            <person name="Petel F.X."/>
            <person name="Pohl T.M."/>
            <person name="Purnelle B."/>
            <person name="Rajandream M.A."/>
            <person name="Rechmann S."/>
            <person name="Rieger M."/>
            <person name="Riles L."/>
            <person name="Roberts D."/>
            <person name="Schaefer M."/>
            <person name="Scharfe M."/>
            <person name="Scherens B."/>
            <person name="Schramm S."/>
            <person name="Schroeder M."/>
            <person name="Sdicu A.-M."/>
            <person name="Tettelin H."/>
            <person name="Urrestarazu L.A."/>
            <person name="Ushinsky S."/>
            <person name="Vierendeels F."/>
            <person name="Vissers S."/>
            <person name="Voss H."/>
            <person name="Walsh S.V."/>
            <person name="Wambutt R."/>
            <person name="Wang Y."/>
            <person name="Wedler E."/>
            <person name="Wedler H."/>
            <person name="Winnett E."/>
            <person name="Zhong W.-W."/>
            <person name="Zollner A."/>
            <person name="Vo D.H."/>
            <person name="Hani J."/>
        </authorList>
    </citation>
    <scope>NUCLEOTIDE SEQUENCE [LARGE SCALE GENOMIC DNA]</scope>
    <source>
        <strain>ATCC 204508 / S288c</strain>
    </source>
</reference>
<reference key="4">
    <citation type="journal article" date="2014" name="G3 (Bethesda)">
        <title>The reference genome sequence of Saccharomyces cerevisiae: Then and now.</title>
        <authorList>
            <person name="Engel S.R."/>
            <person name="Dietrich F.S."/>
            <person name="Fisk D.G."/>
            <person name="Binkley G."/>
            <person name="Balakrishnan R."/>
            <person name="Costanzo M.C."/>
            <person name="Dwight S.S."/>
            <person name="Hitz B.C."/>
            <person name="Karra K."/>
            <person name="Nash R.S."/>
            <person name="Weng S."/>
            <person name="Wong E.D."/>
            <person name="Lloyd P."/>
            <person name="Skrzypek M.S."/>
            <person name="Miyasato S.R."/>
            <person name="Simison M."/>
            <person name="Cherry J.M."/>
        </authorList>
    </citation>
    <scope>GENOME REANNOTATION</scope>
    <source>
        <strain>ATCC 204508 / S288c</strain>
    </source>
</reference>
<reference key="5">
    <citation type="journal article" date="2007" name="Genome Res.">
        <title>Approaching a complete repository of sequence-verified protein-encoding clones for Saccharomyces cerevisiae.</title>
        <authorList>
            <person name="Hu Y."/>
            <person name="Rolfs A."/>
            <person name="Bhullar B."/>
            <person name="Murthy T.V.S."/>
            <person name="Zhu C."/>
            <person name="Berger M.F."/>
            <person name="Camargo A.A."/>
            <person name="Kelley F."/>
            <person name="McCarron S."/>
            <person name="Jepson D."/>
            <person name="Richardson A."/>
            <person name="Raphael J."/>
            <person name="Moreira D."/>
            <person name="Taycher E."/>
            <person name="Zuo D."/>
            <person name="Mohr S."/>
            <person name="Kane M.F."/>
            <person name="Williamson J."/>
            <person name="Simpson A.J.G."/>
            <person name="Bulyk M.L."/>
            <person name="Harlow E."/>
            <person name="Marsischky G."/>
            <person name="Kolodner R.D."/>
            <person name="LaBaer J."/>
        </authorList>
    </citation>
    <scope>NUCLEOTIDE SEQUENCE [GENOMIC DNA]</scope>
    <source>
        <strain>ATCC 204508 / S288c</strain>
    </source>
</reference>
<reference key="6">
    <citation type="journal article" date="1988" name="J. Biol. Chem.">
        <title>A second transport ATPase gene in Saccharomyces cerevisiae.</title>
        <authorList>
            <person name="Schlesser A."/>
            <person name="Ulaszewski S."/>
            <person name="Ghislain M."/>
            <person name="Goffeau A."/>
        </authorList>
    </citation>
    <scope>NUCLEOTIDE SEQUENCE [GENOMIC DNA] OF 1-27</scope>
</reference>
<reference key="7">
    <citation type="journal article" date="1999" name="Mol. Biol. Cell">
        <title>Nascent polypeptide-associated complex stimulates protein import into yeast mitochondria.</title>
        <authorList>
            <person name="Fuenfschilling U."/>
            <person name="Rospert S."/>
        </authorList>
    </citation>
    <scope>FUNCTION</scope>
    <scope>INTERACTION WITH EGD2 AND RIBOSOMES</scope>
    <scope>IDENTIFICATION BY MASS SPECTROMETRY</scope>
</reference>
<reference key="8">
    <citation type="journal article" date="1999" name="Yeast">
        <title>Initial characterization of the nascent polypeptide-associated complex in yeast.</title>
        <authorList>
            <person name="Reimann B."/>
            <person name="Bradsher J."/>
            <person name="Franke J."/>
            <person name="Hartmann E."/>
            <person name="Wiedmann M."/>
            <person name="Prehn S."/>
            <person name="Wiedmann B."/>
        </authorList>
    </citation>
    <scope>FUNCTION</scope>
    <scope>INTERACTION WITH EGD2 AND RIBOSOMES</scope>
</reference>
<reference key="9">
    <citation type="journal article" date="2001" name="J. Cell Sci.">
        <title>Evidence for a nuclear passage of nascent polypeptide-associated complex subunits in yeast.</title>
        <authorList>
            <person name="Franke J."/>
            <person name="Reimann B."/>
            <person name="Hartmann E."/>
            <person name="Koehler M."/>
            <person name="Wiedmann B."/>
        </authorList>
    </citation>
    <scope>SUBCELLULAR LOCATION</scope>
</reference>
<reference key="10">
    <citation type="journal article" date="2003" name="Nature">
        <title>Global analysis of protein localization in budding yeast.</title>
        <authorList>
            <person name="Huh W.-K."/>
            <person name="Falvo J.V."/>
            <person name="Gerke L.C."/>
            <person name="Carroll A.S."/>
            <person name="Howson R.W."/>
            <person name="Weissman J.S."/>
            <person name="O'Shea E.K."/>
        </authorList>
    </citation>
    <scope>SUBCELLULAR LOCATION [LARGE SCALE ANALYSIS]</scope>
</reference>
<reference key="11">
    <citation type="journal article" date="2003" name="Nature">
        <title>Global analysis of protein expression in yeast.</title>
        <authorList>
            <person name="Ghaemmaghami S."/>
            <person name="Huh W.-K."/>
            <person name="Bower K."/>
            <person name="Howson R.W."/>
            <person name="Belle A."/>
            <person name="Dephoure N."/>
            <person name="O'Shea E.K."/>
            <person name="Weissman J.S."/>
        </authorList>
    </citation>
    <scope>LEVEL OF PROTEIN EXPRESSION [LARGE SCALE ANALYSIS]</scope>
</reference>
<reference key="12">
    <citation type="journal article" date="2006" name="J. Biol. Chem.">
        <title>The yeast Ccr4-Not complex controls ubiquitination of the nascent-associated polypeptide (NAC-EGD) complex.</title>
        <authorList>
            <person name="Panasenko O."/>
            <person name="Landrieux E."/>
            <person name="Feuermann M."/>
            <person name="Finka A."/>
            <person name="Paquet N."/>
            <person name="Collart M.A."/>
        </authorList>
    </citation>
    <scope>FUNCTION</scope>
    <scope>ASSOCIATION WITH THE CCR4-NOT COMPLEX</scope>
    <scope>INTERACTION WITH EGD1</scope>
    <scope>UBIQUITINATION</scope>
    <scope>SUBCELLULAR LOCATION</scope>
    <scope>DOMAIN</scope>
</reference>
<reference key="13">
    <citation type="journal article" date="2007" name="J. Proteome Res.">
        <title>Large-scale phosphorylation analysis of alpha-factor-arrested Saccharomyces cerevisiae.</title>
        <authorList>
            <person name="Li X."/>
            <person name="Gerber S.A."/>
            <person name="Rudner A.D."/>
            <person name="Beausoleil S.A."/>
            <person name="Haas W."/>
            <person name="Villen J."/>
            <person name="Elias J.E."/>
            <person name="Gygi S.P."/>
        </authorList>
    </citation>
    <scope>PHOSPHORYLATION [LARGE SCALE ANALYSIS] AT THR-151</scope>
    <scope>IDENTIFICATION BY MASS SPECTROMETRY [LARGE SCALE ANALYSIS]</scope>
    <source>
        <strain>ADR376</strain>
    </source>
</reference>
<reference key="14">
    <citation type="journal article" date="2008" name="Mol. Cell. Proteomics">
        <title>A multidimensional chromatography technology for in-depth phosphoproteome analysis.</title>
        <authorList>
            <person name="Albuquerque C.P."/>
            <person name="Smolka M.B."/>
            <person name="Payne S.H."/>
            <person name="Bafna V."/>
            <person name="Eng J."/>
            <person name="Zhou H."/>
        </authorList>
    </citation>
    <scope>PHOSPHORYLATION [LARGE SCALE ANALYSIS] AT THR-151</scope>
    <scope>IDENTIFICATION BY MASS SPECTROMETRY [LARGE SCALE ANALYSIS]</scope>
</reference>
<reference key="15">
    <citation type="journal article" date="2009" name="Science">
        <title>Global analysis of Cdk1 substrate phosphorylation sites provides insights into evolution.</title>
        <authorList>
            <person name="Holt L.J."/>
            <person name="Tuch B.B."/>
            <person name="Villen J."/>
            <person name="Johnson A.D."/>
            <person name="Gygi S.P."/>
            <person name="Morgan D.O."/>
        </authorList>
    </citation>
    <scope>PHOSPHORYLATION [LARGE SCALE ANALYSIS] AT THR-151</scope>
    <scope>IDENTIFICATION BY MASS SPECTROMETRY [LARGE SCALE ANALYSIS]</scope>
</reference>
<reference key="16">
    <citation type="journal article" date="2012" name="Proc. Natl. Acad. Sci. U.S.A.">
        <title>N-terminal acetylome analyses and functional insights of the N-terminal acetyltransferase NatB.</title>
        <authorList>
            <person name="Van Damme P."/>
            <person name="Lasa M."/>
            <person name="Polevoda B."/>
            <person name="Gazquez C."/>
            <person name="Elosegui-Artola A."/>
            <person name="Kim D.S."/>
            <person name="De Juan-Pardo E."/>
            <person name="Demeyer K."/>
            <person name="Hole K."/>
            <person name="Larrea E."/>
            <person name="Timmerman E."/>
            <person name="Prieto J."/>
            <person name="Arnesen T."/>
            <person name="Sherman F."/>
            <person name="Gevaert K."/>
            <person name="Aldabe R."/>
        </authorList>
    </citation>
    <scope>IDENTIFICATION BY MASS SPECTROMETRY [LARGE SCALE ANALYSIS]</scope>
</reference>
<name>NACB1_YEAST</name>
<organism>
    <name type="scientific">Saccharomyces cerevisiae (strain ATCC 204508 / S288c)</name>
    <name type="common">Baker's yeast</name>
    <dbReference type="NCBI Taxonomy" id="559292"/>
    <lineage>
        <taxon>Eukaryota</taxon>
        <taxon>Fungi</taxon>
        <taxon>Dikarya</taxon>
        <taxon>Ascomycota</taxon>
        <taxon>Saccharomycotina</taxon>
        <taxon>Saccharomycetes</taxon>
        <taxon>Saccharomycetales</taxon>
        <taxon>Saccharomycetaceae</taxon>
        <taxon>Saccharomyces</taxon>
    </lineage>
</organism>
<gene>
    <name type="primary">EGD1</name>
    <name type="ordered locus">YPL037C</name>
</gene>
<feature type="chain" id="PRO_0000213552" description="Nascent polypeptide-associated complex subunit beta-1">
    <location>
        <begin position="1"/>
        <end position="157"/>
    </location>
</feature>
<feature type="domain" description="NAC-A/B" evidence="1">
    <location>
        <begin position="38"/>
        <end position="103"/>
    </location>
</feature>
<feature type="region of interest" description="Disordered" evidence="2">
    <location>
        <begin position="19"/>
        <end position="42"/>
    </location>
</feature>
<feature type="region of interest" description="Disordered" evidence="2">
    <location>
        <begin position="126"/>
        <end position="157"/>
    </location>
</feature>
<feature type="compositionally biased region" description="Basic and acidic residues" evidence="2">
    <location>
        <begin position="126"/>
        <end position="142"/>
    </location>
</feature>
<feature type="modified residue" description="Phosphothreonine" evidence="8 9 10">
    <location>
        <position position="151"/>
    </location>
</feature>
<comment type="function">
    <text evidence="3 4 6">Component of the nascent polypeptide-associated complex (NAC), a dynamic component of the ribosomal exit tunnel, protecting the emerging polypeptides from interaction with other cytoplasmic proteins to ensure appropriate nascent protein targeting. The NAC complex also promotes mitochondrial protein import by enhancing productive ribosome interactions with the outer mitochondrial membrane and blocks the inappropriate interaction of ribosomes translating non-secretory nascent polypeptides with translocation sites in the membrane of the endoplasmic reticulum EGD1 may act as a transcription factor that exert a negative effect on the expression of several genes that are transcribed by RNA polymerase II. Can enhance DNA binding of the GAL4 protein activator.</text>
</comment>
<comment type="subunit">
    <text>Part of the nascent polypeptide-associated complex (NAC), consisting of EGD2 and either EGD1 or BTT1. NAC associates with ribosomes via EGD1 or BTT1, and with the CCR4-NOT complex.</text>
</comment>
<comment type="interaction">
    <interactant intactId="EBI-6371">
        <id>Q02642</id>
    </interactant>
    <interactant intactId="EBI-6379">
        <id>P38879</id>
        <label>EGD2</label>
    </interactant>
    <organismsDiffer>false</organismsDiffer>
    <experiments>5</experiments>
</comment>
<comment type="subcellular location">
    <subcellularLocation>
        <location>Cytoplasm</location>
    </subcellularLocation>
    <subcellularLocation>
        <location>Nucleus</location>
    </subcellularLocation>
    <text>Predominantly cytoplasmic, may also transiently localize to the nucleus.</text>
</comment>
<comment type="PTM">
    <text evidence="6">Ubiquitinated by the NOT4 E3 ligase and the UBC4 E2 ubiquitin conjugation enzyme.</text>
</comment>
<comment type="miscellaneous">
    <text evidence="5">Present with 18000 molecules/cell in log phase SD medium.</text>
</comment>
<comment type="similarity">
    <text evidence="7">Belongs to the NAC-beta family.</text>
</comment>
<comment type="sequence caution" evidence="7">
    <conflict type="frameshift">
        <sequence resource="EMBL-CDS" id="AAB24290"/>
    </conflict>
</comment>
<accession>Q02642</accession>
<accession>D6W3X7</accession>
<accession>Q02107</accession>